<comment type="function">
    <text evidence="3 5 6">Calcium-dependent, calmodulin-stimulated protein phosphatase which plays an essential role in the transduction of intracellular Ca(2+)-mediated signals (By similarity). Many of the substrates contain a PxIxIT motif and/or a LxVP motif (By similarity). This subunit may have a role in the calmodulin activation of calcineurin (Probable). At the periactive zone of synaptic boutons at neuromuscular junctions, promotes formation of phosphatidylinositol 4,5-bisphosphate (PtdIns(4,5)P2) microdomains and subsequent synaptic vesicle reformation during Ca(2+) channel-dependent activity-dependent bulk endocytosis (ADBE) in response to strong stimulation (PubMed:33300871). This function may be fwe-dependent (PubMed:33300871).</text>
</comment>
<comment type="catalytic activity">
    <reaction evidence="3">
        <text>O-phospho-L-seryl-[protein] + H2O = L-seryl-[protein] + phosphate</text>
        <dbReference type="Rhea" id="RHEA:20629"/>
        <dbReference type="Rhea" id="RHEA-COMP:9863"/>
        <dbReference type="Rhea" id="RHEA-COMP:11604"/>
        <dbReference type="ChEBI" id="CHEBI:15377"/>
        <dbReference type="ChEBI" id="CHEBI:29999"/>
        <dbReference type="ChEBI" id="CHEBI:43474"/>
        <dbReference type="ChEBI" id="CHEBI:83421"/>
        <dbReference type="EC" id="3.1.3.16"/>
    </reaction>
</comment>
<comment type="catalytic activity">
    <reaction evidence="3">
        <text>O-phospho-L-threonyl-[protein] + H2O = L-threonyl-[protein] + phosphate</text>
        <dbReference type="Rhea" id="RHEA:47004"/>
        <dbReference type="Rhea" id="RHEA-COMP:11060"/>
        <dbReference type="Rhea" id="RHEA-COMP:11605"/>
        <dbReference type="ChEBI" id="CHEBI:15377"/>
        <dbReference type="ChEBI" id="CHEBI:30013"/>
        <dbReference type="ChEBI" id="CHEBI:43474"/>
        <dbReference type="ChEBI" id="CHEBI:61977"/>
        <dbReference type="EC" id="3.1.3.16"/>
    </reaction>
</comment>
<comment type="cofactor">
    <cofactor evidence="3">
        <name>Fe(3+)</name>
        <dbReference type="ChEBI" id="CHEBI:29034"/>
    </cofactor>
    <text evidence="3">Binds 1 Fe(3+) ion per subunit.</text>
</comment>
<comment type="cofactor">
    <cofactor evidence="3">
        <name>Zn(2+)</name>
        <dbReference type="ChEBI" id="CHEBI:29105"/>
    </cofactor>
    <text evidence="3">Binds 1 zinc ion per subunit.</text>
</comment>
<comment type="subunit">
    <text>Composed of two components (A and B), the A component is the catalytic subunit and the B component confers calcium sensitivity.</text>
</comment>
<comment type="disruption phenotype">
    <text evidence="5">RNAi-mediated knockdown in neurons reduces activation of phosphatidylinositol 4,5-bisphosphate (PtdIns(4,5)P2) in the synaptic boutons of larval neuromuscular junctions (NMJs), in response to high K+ stimuli that induces activity-dependent bulk endocytosis (ADBE) (PubMed:33300871). Under conditions of strong stimuli, the synaptic boutons displays reduced formation of PtdIns(4,5)P2 microdomains at periactive zones and consequently exhibits an impaired Ca2+ response (PubMed:33300871).</text>
</comment>
<comment type="similarity">
    <text evidence="6">Belongs to the PPP phosphatase family. PP-2B subfamily.</text>
</comment>
<comment type="sequence caution" evidence="6">
    <conflict type="erroneous initiation">
        <sequence resource="EMBL-CDS" id="AAA28410"/>
    </conflict>
</comment>
<dbReference type="EC" id="3.1.3.16"/>
<dbReference type="EMBL" id="AE014297">
    <property type="protein sequence ID" value="AAF57105.3"/>
    <property type="molecule type" value="Genomic_DNA"/>
</dbReference>
<dbReference type="EMBL" id="AY128480">
    <property type="protein sequence ID" value="AAM75073.1"/>
    <property type="molecule type" value="mRNA"/>
</dbReference>
<dbReference type="EMBL" id="M97012">
    <property type="protein sequence ID" value="AAA28410.1"/>
    <property type="status" value="ALT_INIT"/>
    <property type="molecule type" value="mRNA"/>
</dbReference>
<dbReference type="EMBL" id="S39996">
    <property type="protein sequence ID" value="AAB22466.1"/>
    <property type="molecule type" value="Genomic_DNA"/>
</dbReference>
<dbReference type="PIR" id="B44307">
    <property type="entry name" value="B44307"/>
</dbReference>
<dbReference type="RefSeq" id="NP_001247378.2">
    <property type="nucleotide sequence ID" value="NM_001260449.2"/>
</dbReference>
<dbReference type="RefSeq" id="NP_524600.3">
    <property type="nucleotide sequence ID" value="NM_079861.4"/>
</dbReference>
<dbReference type="SMR" id="P48456"/>
<dbReference type="BioGRID" id="68520">
    <property type="interactions" value="15"/>
</dbReference>
<dbReference type="FunCoup" id="P48456">
    <property type="interactions" value="102"/>
</dbReference>
<dbReference type="IntAct" id="P48456">
    <property type="interactions" value="5"/>
</dbReference>
<dbReference type="STRING" id="7227.FBpp0306613"/>
<dbReference type="GlyGen" id="P48456">
    <property type="glycosylation" value="1 site, 1 O-linked glycan (1 site)"/>
</dbReference>
<dbReference type="PaxDb" id="7227-FBpp0085094"/>
<dbReference type="DNASU" id="43670"/>
<dbReference type="EnsemblMetazoa" id="FBtr0085732">
    <property type="protein sequence ID" value="FBpp0085094"/>
    <property type="gene ID" value="FBgn0010015"/>
</dbReference>
<dbReference type="EnsemblMetazoa" id="FBtr0334546">
    <property type="protein sequence ID" value="FBpp0306613"/>
    <property type="gene ID" value="FBgn0010015"/>
</dbReference>
<dbReference type="GeneID" id="43670"/>
<dbReference type="KEGG" id="dme:Dmel_CG1455"/>
<dbReference type="AGR" id="FB:FBgn0010015"/>
<dbReference type="CTD" id="43670"/>
<dbReference type="FlyBase" id="FBgn0010015">
    <property type="gene designation" value="CanA1"/>
</dbReference>
<dbReference type="VEuPathDB" id="VectorBase:FBgn0010015"/>
<dbReference type="eggNOG" id="KOG0375">
    <property type="taxonomic scope" value="Eukaryota"/>
</dbReference>
<dbReference type="GeneTree" id="ENSGT00940000154115"/>
<dbReference type="InParanoid" id="P48456"/>
<dbReference type="OMA" id="GSRQKMQ"/>
<dbReference type="OrthoDB" id="5593063at2759"/>
<dbReference type="PhylomeDB" id="P48456"/>
<dbReference type="Reactome" id="R-DME-2025928">
    <property type="pathway name" value="Calcineurin activates NFAT"/>
</dbReference>
<dbReference type="Reactome" id="R-DME-2871809">
    <property type="pathway name" value="FCERI mediated Ca+2 mobilization"/>
</dbReference>
<dbReference type="Reactome" id="R-DME-4086398">
    <property type="pathway name" value="Ca2+ pathway"/>
</dbReference>
<dbReference type="Reactome" id="R-DME-5607763">
    <property type="pathway name" value="CLEC7A (Dectin-1) induces NFAT activation"/>
</dbReference>
<dbReference type="BioGRID-ORCS" id="43670">
    <property type="hits" value="0 hits in 3 CRISPR screens"/>
</dbReference>
<dbReference type="GenomeRNAi" id="43670"/>
<dbReference type="PRO" id="PR:P48456"/>
<dbReference type="Proteomes" id="UP000000803">
    <property type="component" value="Chromosome 3R"/>
</dbReference>
<dbReference type="Bgee" id="FBgn0010015">
    <property type="expression patterns" value="Expressed in indirect flight muscle cell (Drosophila) in post-embryonic organism and 42 other cell types or tissues"/>
</dbReference>
<dbReference type="ExpressionAtlas" id="P48456">
    <property type="expression patterns" value="baseline and differential"/>
</dbReference>
<dbReference type="GO" id="GO:0005955">
    <property type="term" value="C:calcineurin complex"/>
    <property type="evidence" value="ECO:0000250"/>
    <property type="project" value="FlyBase"/>
</dbReference>
<dbReference type="GO" id="GO:0005737">
    <property type="term" value="C:cytoplasm"/>
    <property type="evidence" value="ECO:0000318"/>
    <property type="project" value="GO_Central"/>
</dbReference>
<dbReference type="GO" id="GO:0008021">
    <property type="term" value="C:synaptic vesicle"/>
    <property type="evidence" value="ECO:0000303"/>
    <property type="project" value="FlyBase"/>
</dbReference>
<dbReference type="GO" id="GO:0004723">
    <property type="term" value="F:calcium-dependent protein serine/threonine phosphatase activity"/>
    <property type="evidence" value="ECO:0000250"/>
    <property type="project" value="FlyBase"/>
</dbReference>
<dbReference type="GO" id="GO:0005516">
    <property type="term" value="F:calmodulin binding"/>
    <property type="evidence" value="ECO:0000318"/>
    <property type="project" value="GO_Central"/>
</dbReference>
<dbReference type="GO" id="GO:0033192">
    <property type="term" value="F:calmodulin-dependent protein phosphatase activity"/>
    <property type="evidence" value="ECO:0000318"/>
    <property type="project" value="GO_Central"/>
</dbReference>
<dbReference type="GO" id="GO:0046872">
    <property type="term" value="F:metal ion binding"/>
    <property type="evidence" value="ECO:0007669"/>
    <property type="project" value="UniProtKB-KW"/>
</dbReference>
<dbReference type="GO" id="GO:0004722">
    <property type="term" value="F:protein serine/threonine phosphatase activity"/>
    <property type="evidence" value="ECO:0000250"/>
    <property type="project" value="FlyBase"/>
</dbReference>
<dbReference type="GO" id="GO:0097720">
    <property type="term" value="P:calcineurin-mediated signaling"/>
    <property type="evidence" value="ECO:0000318"/>
    <property type="project" value="GO_Central"/>
</dbReference>
<dbReference type="GO" id="GO:0072375">
    <property type="term" value="P:medium-term memory"/>
    <property type="evidence" value="ECO:0000314"/>
    <property type="project" value="FlyBase"/>
</dbReference>
<dbReference type="GO" id="GO:0000423">
    <property type="term" value="P:mitophagy"/>
    <property type="evidence" value="ECO:0000316"/>
    <property type="project" value="FlyBase"/>
</dbReference>
<dbReference type="GO" id="GO:0042059">
    <property type="term" value="P:negative regulation of epidermal growth factor receptor signaling pathway"/>
    <property type="evidence" value="ECO:0000316"/>
    <property type="project" value="FlyBase"/>
</dbReference>
<dbReference type="GO" id="GO:0045088">
    <property type="term" value="P:regulation of innate immune response"/>
    <property type="evidence" value="ECO:0000314"/>
    <property type="project" value="FlyBase"/>
</dbReference>
<dbReference type="GO" id="GO:0140460">
    <property type="term" value="P:response to Gram-negative bacterium"/>
    <property type="evidence" value="ECO:0000315"/>
    <property type="project" value="FlyBase"/>
</dbReference>
<dbReference type="GO" id="GO:0071731">
    <property type="term" value="P:response to nitric oxide"/>
    <property type="evidence" value="ECO:0000314"/>
    <property type="project" value="FlyBase"/>
</dbReference>
<dbReference type="GO" id="GO:0030431">
    <property type="term" value="P:sleep"/>
    <property type="evidence" value="ECO:0000314"/>
    <property type="project" value="FlyBase"/>
</dbReference>
<dbReference type="CDD" id="cd07416">
    <property type="entry name" value="MPP_PP2B"/>
    <property type="match status" value="1"/>
</dbReference>
<dbReference type="FunFam" id="3.60.21.10:FF:000002">
    <property type="entry name" value="Serine/threonine-protein phosphatase"/>
    <property type="match status" value="1"/>
</dbReference>
<dbReference type="Gene3D" id="3.60.21.10">
    <property type="match status" value="1"/>
</dbReference>
<dbReference type="InterPro" id="IPR004843">
    <property type="entry name" value="Calcineurin-like_PHP_ApaH"/>
</dbReference>
<dbReference type="InterPro" id="IPR029052">
    <property type="entry name" value="Metallo-depent_PP-like"/>
</dbReference>
<dbReference type="InterPro" id="IPR041751">
    <property type="entry name" value="MPP_PP2B"/>
</dbReference>
<dbReference type="InterPro" id="IPR043360">
    <property type="entry name" value="PP2B"/>
</dbReference>
<dbReference type="InterPro" id="IPR006186">
    <property type="entry name" value="Ser/Thr-sp_prot-phosphatase"/>
</dbReference>
<dbReference type="PANTHER" id="PTHR45673">
    <property type="entry name" value="SERINE/THREONINE-PROTEIN PHOSPHATASE 2B CATALYTIC SUBUNIT 1-RELATED"/>
    <property type="match status" value="1"/>
</dbReference>
<dbReference type="Pfam" id="PF00149">
    <property type="entry name" value="Metallophos"/>
    <property type="match status" value="1"/>
</dbReference>
<dbReference type="PRINTS" id="PR00114">
    <property type="entry name" value="STPHPHTASE"/>
</dbReference>
<dbReference type="SMART" id="SM00156">
    <property type="entry name" value="PP2Ac"/>
    <property type="match status" value="1"/>
</dbReference>
<dbReference type="SUPFAM" id="SSF56300">
    <property type="entry name" value="Metallo-dependent phosphatases"/>
    <property type="match status" value="1"/>
</dbReference>
<dbReference type="PROSITE" id="PS00125">
    <property type="entry name" value="SER_THR_PHOSPHATASE"/>
    <property type="match status" value="1"/>
</dbReference>
<gene>
    <name type="primary">CanA1</name>
    <name type="synonym">CNA1</name>
    <name type="synonym">PpD14</name>
    <name type="ORF">CG1455</name>
</gene>
<organism>
    <name type="scientific">Drosophila melanogaster</name>
    <name type="common">Fruit fly</name>
    <dbReference type="NCBI Taxonomy" id="7227"/>
    <lineage>
        <taxon>Eukaryota</taxon>
        <taxon>Metazoa</taxon>
        <taxon>Ecdysozoa</taxon>
        <taxon>Arthropoda</taxon>
        <taxon>Hexapoda</taxon>
        <taxon>Insecta</taxon>
        <taxon>Pterygota</taxon>
        <taxon>Neoptera</taxon>
        <taxon>Endopterygota</taxon>
        <taxon>Diptera</taxon>
        <taxon>Brachycera</taxon>
        <taxon>Muscomorpha</taxon>
        <taxon>Ephydroidea</taxon>
        <taxon>Drosophilidae</taxon>
        <taxon>Drosophila</taxon>
        <taxon>Sophophora</taxon>
    </lineage>
</organism>
<proteinExistence type="evidence at transcript level"/>
<keyword id="KW-0112">Calmodulin-binding</keyword>
<keyword id="KW-0378">Hydrolase</keyword>
<keyword id="KW-0408">Iron</keyword>
<keyword id="KW-0479">Metal-binding</keyword>
<keyword id="KW-0944">Nitration</keyword>
<keyword id="KW-0597">Phosphoprotein</keyword>
<keyword id="KW-0904">Protein phosphatase</keyword>
<keyword id="KW-1185">Reference proteome</keyword>
<keyword id="KW-0862">Zinc</keyword>
<accession>P48456</accession>
<accession>Q8MQN3</accession>
<accession>Q9TY69</accession>
<accession>Q9VA20</accession>
<sequence length="622" mass="69133">MSATSTRSSVTRKSSLSKSSSSDKSAKSSSNSSKSPTAASGNKQKMQYTKTRERMVDDVPLPPTHKLTMSEVYDDPKTGKPNFDALRQHFLLEGRIEEAVALRIITEGAALLREEKNMIDVEAPITVCGDIHGQFFDLVKLFEVGGPPATTRYLFLGDYVDRGYFSIECVLYLWSLKITYPTTLSLLRGNHECRHLTEYFTFKQECIIKYSESIYDACMEAFDCLPLAALLNQQFLCIHGGLSPEIFTLDDIKTLNRFREPPAYGPMCDLLWSDPLEDFGNEKTNEFFSHNSVRGCSYFFSYSACCEFLQKNNLLSIVRAHEAQDAGYRMYRKNQVTGFPSLITIFSAPNYLDVYNNKAAVLKYENNVMNIRQFNCSPHPYWLPNFMDVFTWSLPFVGEKVTEMLVNILNICSDDELVAGPDDELEEELRKKIVLVPANASNNNNNNNTPSKPASMSALRKEIIRNKIRAIGKMSRVFSILREESESVLQLKGLTPTGALPVGALSGGRDSLKEALQGLTASSHIHSFAEAKGLDAVNERMPPRRPLLMSASSSSITTVTRSSSSSSNNNNNNSNTSSTTTTKDISNTSSNDTATVTKTSRTTVKSATTSNVRAGFTAKKFP</sequence>
<reference key="1">
    <citation type="journal article" date="2000" name="Science">
        <title>The genome sequence of Drosophila melanogaster.</title>
        <authorList>
            <person name="Adams M.D."/>
            <person name="Celniker S.E."/>
            <person name="Holt R.A."/>
            <person name="Evans C.A."/>
            <person name="Gocayne J.D."/>
            <person name="Amanatides P.G."/>
            <person name="Scherer S.E."/>
            <person name="Li P.W."/>
            <person name="Hoskins R.A."/>
            <person name="Galle R.F."/>
            <person name="George R.A."/>
            <person name="Lewis S.E."/>
            <person name="Richards S."/>
            <person name="Ashburner M."/>
            <person name="Henderson S.N."/>
            <person name="Sutton G.G."/>
            <person name="Wortman J.R."/>
            <person name="Yandell M.D."/>
            <person name="Zhang Q."/>
            <person name="Chen L.X."/>
            <person name="Brandon R.C."/>
            <person name="Rogers Y.-H.C."/>
            <person name="Blazej R.G."/>
            <person name="Champe M."/>
            <person name="Pfeiffer B.D."/>
            <person name="Wan K.H."/>
            <person name="Doyle C."/>
            <person name="Baxter E.G."/>
            <person name="Helt G."/>
            <person name="Nelson C.R."/>
            <person name="Miklos G.L.G."/>
            <person name="Abril J.F."/>
            <person name="Agbayani A."/>
            <person name="An H.-J."/>
            <person name="Andrews-Pfannkoch C."/>
            <person name="Baldwin D."/>
            <person name="Ballew R.M."/>
            <person name="Basu A."/>
            <person name="Baxendale J."/>
            <person name="Bayraktaroglu L."/>
            <person name="Beasley E.M."/>
            <person name="Beeson K.Y."/>
            <person name="Benos P.V."/>
            <person name="Berman B.P."/>
            <person name="Bhandari D."/>
            <person name="Bolshakov S."/>
            <person name="Borkova D."/>
            <person name="Botchan M.R."/>
            <person name="Bouck J."/>
            <person name="Brokstein P."/>
            <person name="Brottier P."/>
            <person name="Burtis K.C."/>
            <person name="Busam D.A."/>
            <person name="Butler H."/>
            <person name="Cadieu E."/>
            <person name="Center A."/>
            <person name="Chandra I."/>
            <person name="Cherry J.M."/>
            <person name="Cawley S."/>
            <person name="Dahlke C."/>
            <person name="Davenport L.B."/>
            <person name="Davies P."/>
            <person name="de Pablos B."/>
            <person name="Delcher A."/>
            <person name="Deng Z."/>
            <person name="Mays A.D."/>
            <person name="Dew I."/>
            <person name="Dietz S.M."/>
            <person name="Dodson K."/>
            <person name="Doup L.E."/>
            <person name="Downes M."/>
            <person name="Dugan-Rocha S."/>
            <person name="Dunkov B.C."/>
            <person name="Dunn P."/>
            <person name="Durbin K.J."/>
            <person name="Evangelista C.C."/>
            <person name="Ferraz C."/>
            <person name="Ferriera S."/>
            <person name="Fleischmann W."/>
            <person name="Fosler C."/>
            <person name="Gabrielian A.E."/>
            <person name="Garg N.S."/>
            <person name="Gelbart W.M."/>
            <person name="Glasser K."/>
            <person name="Glodek A."/>
            <person name="Gong F."/>
            <person name="Gorrell J.H."/>
            <person name="Gu Z."/>
            <person name="Guan P."/>
            <person name="Harris M."/>
            <person name="Harris N.L."/>
            <person name="Harvey D.A."/>
            <person name="Heiman T.J."/>
            <person name="Hernandez J.R."/>
            <person name="Houck J."/>
            <person name="Hostin D."/>
            <person name="Houston K.A."/>
            <person name="Howland T.J."/>
            <person name="Wei M.-H."/>
            <person name="Ibegwam C."/>
            <person name="Jalali M."/>
            <person name="Kalush F."/>
            <person name="Karpen G.H."/>
            <person name="Ke Z."/>
            <person name="Kennison J.A."/>
            <person name="Ketchum K.A."/>
            <person name="Kimmel B.E."/>
            <person name="Kodira C.D."/>
            <person name="Kraft C.L."/>
            <person name="Kravitz S."/>
            <person name="Kulp D."/>
            <person name="Lai Z."/>
            <person name="Lasko P."/>
            <person name="Lei Y."/>
            <person name="Levitsky A.A."/>
            <person name="Li J.H."/>
            <person name="Li Z."/>
            <person name="Liang Y."/>
            <person name="Lin X."/>
            <person name="Liu X."/>
            <person name="Mattei B."/>
            <person name="McIntosh T.C."/>
            <person name="McLeod M.P."/>
            <person name="McPherson D."/>
            <person name="Merkulov G."/>
            <person name="Milshina N.V."/>
            <person name="Mobarry C."/>
            <person name="Morris J."/>
            <person name="Moshrefi A."/>
            <person name="Mount S.M."/>
            <person name="Moy M."/>
            <person name="Murphy B."/>
            <person name="Murphy L."/>
            <person name="Muzny D.M."/>
            <person name="Nelson D.L."/>
            <person name="Nelson D.R."/>
            <person name="Nelson K.A."/>
            <person name="Nixon K."/>
            <person name="Nusskern D.R."/>
            <person name="Pacleb J.M."/>
            <person name="Palazzolo M."/>
            <person name="Pittman G.S."/>
            <person name="Pan S."/>
            <person name="Pollard J."/>
            <person name="Puri V."/>
            <person name="Reese M.G."/>
            <person name="Reinert K."/>
            <person name="Remington K."/>
            <person name="Saunders R.D.C."/>
            <person name="Scheeler F."/>
            <person name="Shen H."/>
            <person name="Shue B.C."/>
            <person name="Siden-Kiamos I."/>
            <person name="Simpson M."/>
            <person name="Skupski M.P."/>
            <person name="Smith T.J."/>
            <person name="Spier E."/>
            <person name="Spradling A.C."/>
            <person name="Stapleton M."/>
            <person name="Strong R."/>
            <person name="Sun E."/>
            <person name="Svirskas R."/>
            <person name="Tector C."/>
            <person name="Turner R."/>
            <person name="Venter E."/>
            <person name="Wang A.H."/>
            <person name="Wang X."/>
            <person name="Wang Z.-Y."/>
            <person name="Wassarman D.A."/>
            <person name="Weinstock G.M."/>
            <person name="Weissenbach J."/>
            <person name="Williams S.M."/>
            <person name="Woodage T."/>
            <person name="Worley K.C."/>
            <person name="Wu D."/>
            <person name="Yang S."/>
            <person name="Yao Q.A."/>
            <person name="Ye J."/>
            <person name="Yeh R.-F."/>
            <person name="Zaveri J.S."/>
            <person name="Zhan M."/>
            <person name="Zhang G."/>
            <person name="Zhao Q."/>
            <person name="Zheng L."/>
            <person name="Zheng X.H."/>
            <person name="Zhong F.N."/>
            <person name="Zhong W."/>
            <person name="Zhou X."/>
            <person name="Zhu S.C."/>
            <person name="Zhu X."/>
            <person name="Smith H.O."/>
            <person name="Gibbs R.A."/>
            <person name="Myers E.W."/>
            <person name="Rubin G.M."/>
            <person name="Venter J.C."/>
        </authorList>
    </citation>
    <scope>NUCLEOTIDE SEQUENCE [LARGE SCALE GENOMIC DNA]</scope>
    <source>
        <strain>Berkeley</strain>
    </source>
</reference>
<reference key="2">
    <citation type="journal article" date="2002" name="Genome Biol.">
        <title>Annotation of the Drosophila melanogaster euchromatic genome: a systematic review.</title>
        <authorList>
            <person name="Misra S."/>
            <person name="Crosby M.A."/>
            <person name="Mungall C.J."/>
            <person name="Matthews B.B."/>
            <person name="Campbell K.S."/>
            <person name="Hradecky P."/>
            <person name="Huang Y."/>
            <person name="Kaminker J.S."/>
            <person name="Millburn G.H."/>
            <person name="Prochnik S.E."/>
            <person name="Smith C.D."/>
            <person name="Tupy J.L."/>
            <person name="Whitfield E.J."/>
            <person name="Bayraktaroglu L."/>
            <person name="Berman B.P."/>
            <person name="Bettencourt B.R."/>
            <person name="Celniker S.E."/>
            <person name="de Grey A.D.N.J."/>
            <person name="Drysdale R.A."/>
            <person name="Harris N.L."/>
            <person name="Richter J."/>
            <person name="Russo S."/>
            <person name="Schroeder A.J."/>
            <person name="Shu S.Q."/>
            <person name="Stapleton M."/>
            <person name="Yamada C."/>
            <person name="Ashburner M."/>
            <person name="Gelbart W.M."/>
            <person name="Rubin G.M."/>
            <person name="Lewis S.E."/>
        </authorList>
    </citation>
    <scope>GENOME REANNOTATION</scope>
    <source>
        <strain>Berkeley</strain>
    </source>
</reference>
<reference key="3">
    <citation type="journal article" date="2002" name="Genome Biol.">
        <title>A Drosophila full-length cDNA resource.</title>
        <authorList>
            <person name="Stapleton M."/>
            <person name="Carlson J.W."/>
            <person name="Brokstein P."/>
            <person name="Yu C."/>
            <person name="Champe M."/>
            <person name="George R.A."/>
            <person name="Guarin H."/>
            <person name="Kronmiller B."/>
            <person name="Pacleb J.M."/>
            <person name="Park S."/>
            <person name="Wan K.H."/>
            <person name="Rubin G.M."/>
            <person name="Celniker S.E."/>
        </authorList>
    </citation>
    <scope>NUCLEOTIDE SEQUENCE [LARGE SCALE MRNA]</scope>
    <source>
        <strain>Berkeley</strain>
        <tissue>Embryo</tissue>
    </source>
</reference>
<reference key="4">
    <citation type="journal article" date="1992" name="J. Biol. Chem.">
        <title>Molecular cloning and characterization of the genes encoding the two subunits of Drosophila melanogaster calcineurin.</title>
        <authorList>
            <person name="Guerini D."/>
            <person name="Montell C."/>
            <person name="Klee C.B."/>
        </authorList>
    </citation>
    <scope>NUCLEOTIDE SEQUENCE [MRNA] OF 32-622</scope>
</reference>
<reference key="5">
    <citation type="journal article" date="1992" name="FEBS Lett.">
        <title>Polymerase chain reactions using Saccharomyces, Drosophila and human DNA predict a large family of protein serine/threonine phosphatases.</title>
        <authorList>
            <person name="Chen M.X."/>
            <person name="Chen Y.H."/>
            <person name="Cohen P.T.W."/>
        </authorList>
    </citation>
    <scope>NUCLEOTIDE SEQUENCE [GENOMIC DNA] OF 134-157</scope>
</reference>
<reference key="6">
    <citation type="journal article" date="2020" name="Elife">
        <title>A positive feedback loop between Flower and PI(4,5)P2 at periactive zones controls bulk endocytosis in Drosophila.</title>
        <authorList>
            <person name="Li T.N."/>
            <person name="Chen Y.J."/>
            <person name="Lu T.Y."/>
            <person name="Wang Y.T."/>
            <person name="Lin H.C."/>
            <person name="Yao C.K."/>
        </authorList>
    </citation>
    <scope>FUNCTION</scope>
    <scope>DISRUPTION PHENOTYPE</scope>
</reference>
<name>PP2B1_DROME</name>
<feature type="chain" id="PRO_0000058830" description="Serine/threonine-protein phosphatase 2B catalytic subunit 1">
    <location>
        <begin position="1"/>
        <end position="622"/>
    </location>
</feature>
<feature type="region of interest" description="Disordered" evidence="4">
    <location>
        <begin position="1"/>
        <end position="74"/>
    </location>
</feature>
<feature type="region of interest" description="Disordered" evidence="4">
    <location>
        <begin position="545"/>
        <end position="606"/>
    </location>
</feature>
<feature type="short sequence motif" description="SAPNY motif" evidence="3">
    <location>
        <begin position="347"/>
        <end position="351"/>
    </location>
</feature>
<feature type="compositionally biased region" description="Low complexity" evidence="4">
    <location>
        <begin position="1"/>
        <end position="40"/>
    </location>
</feature>
<feature type="compositionally biased region" description="Low complexity" evidence="4">
    <location>
        <begin position="550"/>
        <end position="606"/>
    </location>
</feature>
<feature type="active site" description="Proton donor" evidence="3">
    <location>
        <position position="191"/>
    </location>
</feature>
<feature type="binding site" evidence="3">
    <location>
        <position position="130"/>
    </location>
    <ligand>
        <name>Fe cation</name>
        <dbReference type="ChEBI" id="CHEBI:24875"/>
    </ligand>
</feature>
<feature type="binding site" evidence="3">
    <location>
        <position position="132"/>
    </location>
    <ligand>
        <name>Fe cation</name>
        <dbReference type="ChEBI" id="CHEBI:24875"/>
    </ligand>
</feature>
<feature type="binding site" evidence="3">
    <location>
        <position position="158"/>
    </location>
    <ligand>
        <name>Fe cation</name>
        <dbReference type="ChEBI" id="CHEBI:24875"/>
    </ligand>
</feature>
<feature type="binding site" evidence="3">
    <location>
        <position position="158"/>
    </location>
    <ligand>
        <name>Zn(2+)</name>
        <dbReference type="ChEBI" id="CHEBI:29105"/>
    </ligand>
</feature>
<feature type="binding site" evidence="3">
    <location>
        <position position="190"/>
    </location>
    <ligand>
        <name>Zn(2+)</name>
        <dbReference type="ChEBI" id="CHEBI:29105"/>
    </ligand>
</feature>
<feature type="binding site" evidence="3">
    <location>
        <position position="239"/>
    </location>
    <ligand>
        <name>Zn(2+)</name>
        <dbReference type="ChEBI" id="CHEBI:29105"/>
    </ligand>
</feature>
<feature type="binding site" evidence="3">
    <location>
        <position position="321"/>
    </location>
    <ligand>
        <name>Zn(2+)</name>
        <dbReference type="ChEBI" id="CHEBI:29105"/>
    </ligand>
</feature>
<feature type="site" description="Interaction with PxVP motif in substrate" evidence="3">
    <location>
        <position position="392"/>
    </location>
</feature>
<feature type="modified residue" description="3'-nitrotyrosine" evidence="1">
    <location>
        <position position="264"/>
    </location>
</feature>
<feature type="modified residue" description="Phosphoserine" evidence="2">
    <location>
        <position position="527"/>
    </location>
</feature>
<feature type="modified residue" description="Phosphoserine" evidence="3">
    <location>
        <position position="567"/>
    </location>
</feature>
<feature type="sequence conflict" description="In Ref. 4; AAA28410." evidence="6" ref="4">
    <original>L</original>
    <variation>V</variation>
    <location>
        <position position="459"/>
    </location>
</feature>
<feature type="sequence conflict" description="In Ref. 4; AAA28410." evidence="6" ref="4">
    <original>P</original>
    <variation>S</variation>
    <location>
        <position position="622"/>
    </location>
</feature>
<evidence type="ECO:0000250" key="1">
    <source>
        <dbReference type="UniProtKB" id="P63328"/>
    </source>
</evidence>
<evidence type="ECO:0000250" key="2">
    <source>
        <dbReference type="UniProtKB" id="P63329"/>
    </source>
</evidence>
<evidence type="ECO:0000250" key="3">
    <source>
        <dbReference type="UniProtKB" id="Q08209"/>
    </source>
</evidence>
<evidence type="ECO:0000256" key="4">
    <source>
        <dbReference type="SAM" id="MobiDB-lite"/>
    </source>
</evidence>
<evidence type="ECO:0000269" key="5">
    <source>
    </source>
</evidence>
<evidence type="ECO:0000305" key="6"/>
<protein>
    <recommendedName>
        <fullName>Serine/threonine-protein phosphatase 2B catalytic subunit 1</fullName>
        <ecNumber>3.1.3.16</ecNumber>
    </recommendedName>
    <alternativeName>
        <fullName>Calmodulin-dependent calcineurin A1 subunit</fullName>
    </alternativeName>
</protein>